<gene>
    <name evidence="1" type="primary">dabA</name>
    <name type="ordered locus">SAHV_0451</name>
</gene>
<proteinExistence type="inferred from homology"/>
<organism>
    <name type="scientific">Staphylococcus aureus (strain Mu3 / ATCC 700698)</name>
    <dbReference type="NCBI Taxonomy" id="418127"/>
    <lineage>
        <taxon>Bacteria</taxon>
        <taxon>Bacillati</taxon>
        <taxon>Bacillota</taxon>
        <taxon>Bacilli</taxon>
        <taxon>Bacillales</taxon>
        <taxon>Staphylococcaceae</taxon>
        <taxon>Staphylococcus</taxon>
    </lineage>
</organism>
<name>DABA_STAA1</name>
<sequence length="901" mass="102576">MTTQLNINSVIENAKRVITPLSPISIFAARNPWEGLEADTFEDVAKWLRDVRDVDIFPNKALIESAVARGELDESVFNQLVTDMLLEHHYNIPQHYINLYIDNIKTLKDVPASYMNHSNVDVVADLLLEKSKRDMAESYHHYDVRPMSDAIIDEQGEPLSEQVNRQMIKWTKLYIDQFLSSWTMPKREQSFYHAWLHLAQHDHSFTKAQRQVIKGLPNDPEMTIESVLTYFSIDQEDYQAYVEGHLLALPGWAGMLYYRSQQHHFEQHLLTDYLAIRLVVEQLLVGDEFKSVTKDCESRSENWFKQTVASLCYYSDMPSDVLLQHDVNEIQTFIHFAATMNKNVFKNLWLIAWEMTYESQLKQKIKAGHESVAGALDVNQVNVSENDNANQPHSVLLNDTQAVDENNSELNQVGTSTKAQIAFCIDVRSEPFRRHIEAAGPFETIGIAGFFGLPIQKDAVDEQFKHDSLPVMVPPAYRIKEFADRYDMNVYRQQQQTMSSMFYTFKLMKNNVMPSLLLPELSGPFLSLSTIVNSIMPRKSRASLQKIKQKWLKKPETKLTIDREFDRTSDLPVGFTEQEQIDFALQALKLMDLTEAFAPFVVLAGHASHSHNNPHHASLECGACGGASSGFNAKLLAMICNRPNVRQGLKQSGVYIPETTVFAAAEHHTSTDTLAWVYVPDTLSALALDAYESLNDAMPMISEQANRERLDKLPTIGRVNHPVEEAQRFASDWSEVRPEWGLAKNASFIIGRRQLTKGIDLEGRTFLHNYDWRKDKDGKLLNTIISGPALVAQWINLQYYASTVAPHFYGSGNKATQTVTSGVGVMQGNASDLMYGLSWQSVMAADRTMYHSPIRLLVVIQAPDYVVARLFANNEHFARKVSNHWLRLMSVNEEGRFKSWI</sequence>
<evidence type="ECO:0000255" key="1">
    <source>
        <dbReference type="HAMAP-Rule" id="MF_01871"/>
    </source>
</evidence>
<protein>
    <recommendedName>
        <fullName evidence="1">Probable inorganic carbon transporter subunit DabA</fullName>
    </recommendedName>
</protein>
<comment type="function">
    <text evidence="1">Part of an energy-coupled inorganic carbon pump.</text>
</comment>
<comment type="cofactor">
    <cofactor evidence="1">
        <name>Zn(2+)</name>
        <dbReference type="ChEBI" id="CHEBI:29105"/>
    </cofactor>
</comment>
<comment type="subunit">
    <text evidence="1">Forms a complex with DabB.</text>
</comment>
<comment type="subcellular location">
    <subcellularLocation>
        <location evidence="1">Cell membrane</location>
        <topology evidence="1">Peripheral membrane protein</topology>
    </subcellularLocation>
</comment>
<comment type="similarity">
    <text evidence="1">Belongs to the inorganic carbon transporter (TC 9.A.2) DabA family.</text>
</comment>
<reference key="1">
    <citation type="journal article" date="2008" name="Antimicrob. Agents Chemother.">
        <title>Mutated response regulator graR is responsible for phenotypic conversion of Staphylococcus aureus from heterogeneous vancomycin-intermediate resistance to vancomycin-intermediate resistance.</title>
        <authorList>
            <person name="Neoh H.-M."/>
            <person name="Cui L."/>
            <person name="Yuzawa H."/>
            <person name="Takeuchi F."/>
            <person name="Matsuo M."/>
            <person name="Hiramatsu K."/>
        </authorList>
    </citation>
    <scope>NUCLEOTIDE SEQUENCE [LARGE SCALE GENOMIC DNA]</scope>
    <source>
        <strain>Mu3 / ATCC 700698</strain>
    </source>
</reference>
<feature type="chain" id="PRO_0000387308" description="Probable inorganic carbon transporter subunit DabA">
    <location>
        <begin position="1"/>
        <end position="901"/>
    </location>
</feature>
<feature type="binding site" evidence="1">
    <location>
        <position position="424"/>
    </location>
    <ligand>
        <name>Zn(2+)</name>
        <dbReference type="ChEBI" id="CHEBI:29105"/>
    </ligand>
</feature>
<feature type="binding site" evidence="1">
    <location>
        <position position="426"/>
    </location>
    <ligand>
        <name>Zn(2+)</name>
        <dbReference type="ChEBI" id="CHEBI:29105"/>
    </ligand>
</feature>
<feature type="binding site" evidence="1">
    <location>
        <position position="606"/>
    </location>
    <ligand>
        <name>Zn(2+)</name>
        <dbReference type="ChEBI" id="CHEBI:29105"/>
    </ligand>
</feature>
<feature type="binding site" evidence="1">
    <location>
        <position position="621"/>
    </location>
    <ligand>
        <name>Zn(2+)</name>
        <dbReference type="ChEBI" id="CHEBI:29105"/>
    </ligand>
</feature>
<dbReference type="EMBL" id="AP009324">
    <property type="protein sequence ID" value="BAF77334.1"/>
    <property type="molecule type" value="Genomic_DNA"/>
</dbReference>
<dbReference type="RefSeq" id="WP_000211545.1">
    <property type="nucleotide sequence ID" value="NC_009782.1"/>
</dbReference>
<dbReference type="KEGG" id="saw:SAHV_0451"/>
<dbReference type="HOGENOM" id="CLU_009885_0_0_9"/>
<dbReference type="GO" id="GO:0005886">
    <property type="term" value="C:plasma membrane"/>
    <property type="evidence" value="ECO:0007669"/>
    <property type="project" value="UniProtKB-SubCell"/>
</dbReference>
<dbReference type="GO" id="GO:0008270">
    <property type="term" value="F:zinc ion binding"/>
    <property type="evidence" value="ECO:0007669"/>
    <property type="project" value="UniProtKB-UniRule"/>
</dbReference>
<dbReference type="HAMAP" id="MF_01871">
    <property type="entry name" value="DabA"/>
    <property type="match status" value="1"/>
</dbReference>
<dbReference type="InterPro" id="IPR018752">
    <property type="entry name" value="DabA"/>
</dbReference>
<dbReference type="PANTHER" id="PTHR38344:SF1">
    <property type="entry name" value="INORGANIC CARBON TRANSPORTER SUBUNIT DABA-RELATED"/>
    <property type="match status" value="1"/>
</dbReference>
<dbReference type="PANTHER" id="PTHR38344">
    <property type="entry name" value="UPF0753 PROTEIN AQ_863"/>
    <property type="match status" value="1"/>
</dbReference>
<dbReference type="Pfam" id="PF10070">
    <property type="entry name" value="DabA"/>
    <property type="match status" value="1"/>
</dbReference>
<keyword id="KW-1003">Cell membrane</keyword>
<keyword id="KW-0472">Membrane</keyword>
<keyword id="KW-0479">Metal-binding</keyword>
<keyword id="KW-0813">Transport</keyword>
<keyword id="KW-0862">Zinc</keyword>
<accession>A7WYH9</accession>